<keyword id="KW-0963">Cytoplasm</keyword>
<keyword id="KW-0342">GTP-binding</keyword>
<keyword id="KW-0378">Hydrolase</keyword>
<keyword id="KW-0460">Magnesium</keyword>
<keyword id="KW-0479">Metal-binding</keyword>
<keyword id="KW-0547">Nucleotide-binding</keyword>
<keyword id="KW-0630">Potassium</keyword>
<keyword id="KW-0819">tRNA processing</keyword>
<proteinExistence type="inferred from homology"/>
<gene>
    <name evidence="1" type="primary">mnmE</name>
    <name evidence="1" type="synonym">trmE</name>
    <name type="ordered locus">ECP_3907</name>
</gene>
<accession>Q0TB01</accession>
<reference key="1">
    <citation type="journal article" date="2006" name="Mol. Microbiol.">
        <title>Role of pathogenicity island-associated integrases in the genome plasticity of uropathogenic Escherichia coli strain 536.</title>
        <authorList>
            <person name="Hochhut B."/>
            <person name="Wilde C."/>
            <person name="Balling G."/>
            <person name="Middendorf B."/>
            <person name="Dobrindt U."/>
            <person name="Brzuszkiewicz E."/>
            <person name="Gottschalk G."/>
            <person name="Carniel E."/>
            <person name="Hacker J."/>
        </authorList>
    </citation>
    <scope>NUCLEOTIDE SEQUENCE [LARGE SCALE GENOMIC DNA]</scope>
    <source>
        <strain>536 / UPEC</strain>
    </source>
</reference>
<sequence>MSDNDTIVAQATPPGRGGVGILRISGLKAREVAETVLGKLPKPRYADYLPFKDADGSVLDQGIALWFPGPNSFTGEDVLELQGHGGPVILDLLLKRILTIPGLRIARPGEFSERAFLNDKLDLAQAEAIADLIDASSEQAARSALNSLQGAFSARVNHLVEALTHLRIYVEAAIDFPDEEIDFLSDGKIEAQLNNVIADLDAVRAEARQGSLLREGMKVVIAGRPNAGKSSLLNALAGREAAIVTDIAGTTRDVLREHIHIDGMPLHIIDTAGLREASDEVERIGIERAWQEIEQADRVLFMVDGTTTDAVDPAEIWPEFIARLPAKLPITVVRNKADITGETLGMSEVNGHALIRLSARTGEGVDVLRNHLKQSMGFDTNMEGGFLARRRHLQALEQAAEHLQQGKAQLLGAWAGELLAEELRLAQQNLSEITGEFTSDDLLGRIFSSFCIGK</sequence>
<dbReference type="EC" id="3.6.-.-" evidence="1"/>
<dbReference type="EMBL" id="CP000247">
    <property type="protein sequence ID" value="ABG71878.1"/>
    <property type="molecule type" value="Genomic_DNA"/>
</dbReference>
<dbReference type="RefSeq" id="WP_001282368.1">
    <property type="nucleotide sequence ID" value="NC_008253.1"/>
</dbReference>
<dbReference type="SMR" id="Q0TB01"/>
<dbReference type="KEGG" id="ecp:ECP_3907"/>
<dbReference type="HOGENOM" id="CLU_019624_4_1_6"/>
<dbReference type="Proteomes" id="UP000009182">
    <property type="component" value="Chromosome"/>
</dbReference>
<dbReference type="GO" id="GO:0005829">
    <property type="term" value="C:cytosol"/>
    <property type="evidence" value="ECO:0007669"/>
    <property type="project" value="TreeGrafter"/>
</dbReference>
<dbReference type="GO" id="GO:0005525">
    <property type="term" value="F:GTP binding"/>
    <property type="evidence" value="ECO:0007669"/>
    <property type="project" value="UniProtKB-UniRule"/>
</dbReference>
<dbReference type="GO" id="GO:0003924">
    <property type="term" value="F:GTPase activity"/>
    <property type="evidence" value="ECO:0007669"/>
    <property type="project" value="UniProtKB-UniRule"/>
</dbReference>
<dbReference type="GO" id="GO:0046872">
    <property type="term" value="F:metal ion binding"/>
    <property type="evidence" value="ECO:0007669"/>
    <property type="project" value="UniProtKB-KW"/>
</dbReference>
<dbReference type="GO" id="GO:0030488">
    <property type="term" value="P:tRNA methylation"/>
    <property type="evidence" value="ECO:0007669"/>
    <property type="project" value="TreeGrafter"/>
</dbReference>
<dbReference type="GO" id="GO:0002098">
    <property type="term" value="P:tRNA wobble uridine modification"/>
    <property type="evidence" value="ECO:0007669"/>
    <property type="project" value="TreeGrafter"/>
</dbReference>
<dbReference type="CDD" id="cd04164">
    <property type="entry name" value="trmE"/>
    <property type="match status" value="1"/>
</dbReference>
<dbReference type="CDD" id="cd14858">
    <property type="entry name" value="TrmE_N"/>
    <property type="match status" value="1"/>
</dbReference>
<dbReference type="FunFam" id="3.30.1360.120:FF:000001">
    <property type="entry name" value="tRNA modification GTPase MnmE"/>
    <property type="match status" value="1"/>
</dbReference>
<dbReference type="FunFam" id="3.40.50.300:FF:000249">
    <property type="entry name" value="tRNA modification GTPase MnmE"/>
    <property type="match status" value="1"/>
</dbReference>
<dbReference type="Gene3D" id="3.40.50.300">
    <property type="entry name" value="P-loop containing nucleotide triphosphate hydrolases"/>
    <property type="match status" value="1"/>
</dbReference>
<dbReference type="Gene3D" id="3.30.1360.120">
    <property type="entry name" value="Probable tRNA modification gtpase trme, domain 1"/>
    <property type="match status" value="1"/>
</dbReference>
<dbReference type="Gene3D" id="1.20.120.430">
    <property type="entry name" value="tRNA modification GTPase MnmE domain 2"/>
    <property type="match status" value="1"/>
</dbReference>
<dbReference type="HAMAP" id="MF_00379">
    <property type="entry name" value="GTPase_MnmE"/>
    <property type="match status" value="1"/>
</dbReference>
<dbReference type="InterPro" id="IPR031168">
    <property type="entry name" value="G_TrmE"/>
</dbReference>
<dbReference type="InterPro" id="IPR006073">
    <property type="entry name" value="GTP-bd"/>
</dbReference>
<dbReference type="InterPro" id="IPR018948">
    <property type="entry name" value="GTP-bd_TrmE_N"/>
</dbReference>
<dbReference type="InterPro" id="IPR004520">
    <property type="entry name" value="GTPase_MnmE"/>
</dbReference>
<dbReference type="InterPro" id="IPR027368">
    <property type="entry name" value="MnmE_dom2"/>
</dbReference>
<dbReference type="InterPro" id="IPR025867">
    <property type="entry name" value="MnmE_helical"/>
</dbReference>
<dbReference type="InterPro" id="IPR027417">
    <property type="entry name" value="P-loop_NTPase"/>
</dbReference>
<dbReference type="InterPro" id="IPR005225">
    <property type="entry name" value="Small_GTP-bd"/>
</dbReference>
<dbReference type="InterPro" id="IPR027266">
    <property type="entry name" value="TrmE/GcvT_dom1"/>
</dbReference>
<dbReference type="NCBIfam" id="TIGR00450">
    <property type="entry name" value="mnmE_trmE_thdF"/>
    <property type="match status" value="1"/>
</dbReference>
<dbReference type="NCBIfam" id="NF003661">
    <property type="entry name" value="PRK05291.1-3"/>
    <property type="match status" value="1"/>
</dbReference>
<dbReference type="NCBIfam" id="TIGR00231">
    <property type="entry name" value="small_GTP"/>
    <property type="match status" value="1"/>
</dbReference>
<dbReference type="PANTHER" id="PTHR42714">
    <property type="entry name" value="TRNA MODIFICATION GTPASE GTPBP3"/>
    <property type="match status" value="1"/>
</dbReference>
<dbReference type="PANTHER" id="PTHR42714:SF2">
    <property type="entry name" value="TRNA MODIFICATION GTPASE GTPBP3, MITOCHONDRIAL"/>
    <property type="match status" value="1"/>
</dbReference>
<dbReference type="Pfam" id="PF01926">
    <property type="entry name" value="MMR_HSR1"/>
    <property type="match status" value="1"/>
</dbReference>
<dbReference type="Pfam" id="PF12631">
    <property type="entry name" value="MnmE_helical"/>
    <property type="match status" value="1"/>
</dbReference>
<dbReference type="Pfam" id="PF10396">
    <property type="entry name" value="TrmE_N"/>
    <property type="match status" value="1"/>
</dbReference>
<dbReference type="SUPFAM" id="SSF52540">
    <property type="entry name" value="P-loop containing nucleoside triphosphate hydrolases"/>
    <property type="match status" value="1"/>
</dbReference>
<dbReference type="SUPFAM" id="SSF116878">
    <property type="entry name" value="TrmE connector domain"/>
    <property type="match status" value="1"/>
</dbReference>
<dbReference type="PROSITE" id="PS51709">
    <property type="entry name" value="G_TRME"/>
    <property type="match status" value="1"/>
</dbReference>
<protein>
    <recommendedName>
        <fullName evidence="1">tRNA modification GTPase MnmE</fullName>
        <ecNumber evidence="1">3.6.-.-</ecNumber>
    </recommendedName>
</protein>
<evidence type="ECO:0000255" key="1">
    <source>
        <dbReference type="HAMAP-Rule" id="MF_00379"/>
    </source>
</evidence>
<name>MNME_ECOL5</name>
<feature type="chain" id="PRO_1000048824" description="tRNA modification GTPase MnmE">
    <location>
        <begin position="1"/>
        <end position="454"/>
    </location>
</feature>
<feature type="domain" description="TrmE-type G">
    <location>
        <begin position="216"/>
        <end position="377"/>
    </location>
</feature>
<feature type="binding site" evidence="1">
    <location>
        <position position="23"/>
    </location>
    <ligand>
        <name>(6S)-5-formyl-5,6,7,8-tetrahydrofolate</name>
        <dbReference type="ChEBI" id="CHEBI:57457"/>
    </ligand>
</feature>
<feature type="binding site" evidence="1">
    <location>
        <position position="80"/>
    </location>
    <ligand>
        <name>(6S)-5-formyl-5,6,7,8-tetrahydrofolate</name>
        <dbReference type="ChEBI" id="CHEBI:57457"/>
    </ligand>
</feature>
<feature type="binding site" evidence="1">
    <location>
        <position position="120"/>
    </location>
    <ligand>
        <name>(6S)-5-formyl-5,6,7,8-tetrahydrofolate</name>
        <dbReference type="ChEBI" id="CHEBI:57457"/>
    </ligand>
</feature>
<feature type="binding site" evidence="1">
    <location>
        <begin position="226"/>
        <end position="231"/>
    </location>
    <ligand>
        <name>GTP</name>
        <dbReference type="ChEBI" id="CHEBI:37565"/>
    </ligand>
</feature>
<feature type="binding site" evidence="1">
    <location>
        <position position="226"/>
    </location>
    <ligand>
        <name>K(+)</name>
        <dbReference type="ChEBI" id="CHEBI:29103"/>
    </ligand>
</feature>
<feature type="binding site" evidence="1">
    <location>
        <position position="230"/>
    </location>
    <ligand>
        <name>Mg(2+)</name>
        <dbReference type="ChEBI" id="CHEBI:18420"/>
    </ligand>
</feature>
<feature type="binding site" evidence="1">
    <location>
        <begin position="245"/>
        <end position="251"/>
    </location>
    <ligand>
        <name>GTP</name>
        <dbReference type="ChEBI" id="CHEBI:37565"/>
    </ligand>
</feature>
<feature type="binding site" evidence="1">
    <location>
        <position position="245"/>
    </location>
    <ligand>
        <name>K(+)</name>
        <dbReference type="ChEBI" id="CHEBI:29103"/>
    </ligand>
</feature>
<feature type="binding site" evidence="1">
    <location>
        <position position="247"/>
    </location>
    <ligand>
        <name>K(+)</name>
        <dbReference type="ChEBI" id="CHEBI:29103"/>
    </ligand>
</feature>
<feature type="binding site" evidence="1">
    <location>
        <position position="250"/>
    </location>
    <ligand>
        <name>K(+)</name>
        <dbReference type="ChEBI" id="CHEBI:29103"/>
    </ligand>
</feature>
<feature type="binding site" evidence="1">
    <location>
        <position position="251"/>
    </location>
    <ligand>
        <name>Mg(2+)</name>
        <dbReference type="ChEBI" id="CHEBI:18420"/>
    </ligand>
</feature>
<feature type="binding site" evidence="1">
    <location>
        <begin position="270"/>
        <end position="273"/>
    </location>
    <ligand>
        <name>GTP</name>
        <dbReference type="ChEBI" id="CHEBI:37565"/>
    </ligand>
</feature>
<feature type="binding site" evidence="1">
    <location>
        <begin position="335"/>
        <end position="338"/>
    </location>
    <ligand>
        <name>GTP</name>
        <dbReference type="ChEBI" id="CHEBI:37565"/>
    </ligand>
</feature>
<feature type="binding site" evidence="1">
    <location>
        <begin position="358"/>
        <end position="360"/>
    </location>
    <ligand>
        <name>GTP</name>
        <dbReference type="ChEBI" id="CHEBI:37565"/>
    </ligand>
</feature>
<feature type="binding site" evidence="1">
    <location>
        <position position="454"/>
    </location>
    <ligand>
        <name>(6S)-5-formyl-5,6,7,8-tetrahydrofolate</name>
        <dbReference type="ChEBI" id="CHEBI:57457"/>
    </ligand>
</feature>
<organism>
    <name type="scientific">Escherichia coli O6:K15:H31 (strain 536 / UPEC)</name>
    <dbReference type="NCBI Taxonomy" id="362663"/>
    <lineage>
        <taxon>Bacteria</taxon>
        <taxon>Pseudomonadati</taxon>
        <taxon>Pseudomonadota</taxon>
        <taxon>Gammaproteobacteria</taxon>
        <taxon>Enterobacterales</taxon>
        <taxon>Enterobacteriaceae</taxon>
        <taxon>Escherichia</taxon>
    </lineage>
</organism>
<comment type="function">
    <text evidence="1">Exhibits a very high intrinsic GTPase hydrolysis rate. Involved in the addition of a carboxymethylaminomethyl (cmnm) group at the wobble position (U34) of certain tRNAs, forming tRNA-cmnm(5)s(2)U34.</text>
</comment>
<comment type="cofactor">
    <cofactor evidence="1">
        <name>K(+)</name>
        <dbReference type="ChEBI" id="CHEBI:29103"/>
    </cofactor>
    <text evidence="1">Binds 1 potassium ion per subunit.</text>
</comment>
<comment type="subunit">
    <text evidence="1">Homodimer. Heterotetramer of two MnmE and two MnmG subunits.</text>
</comment>
<comment type="subcellular location">
    <subcellularLocation>
        <location evidence="1">Cytoplasm</location>
    </subcellularLocation>
</comment>
<comment type="similarity">
    <text evidence="1">Belongs to the TRAFAC class TrmE-Era-EngA-EngB-Septin-like GTPase superfamily. TrmE GTPase family.</text>
</comment>